<accession>Q63H58</accession>
<protein>
    <recommendedName>
        <fullName evidence="1">Large ribosomal subunit protein uL13</fullName>
    </recommendedName>
    <alternativeName>
        <fullName evidence="2">50S ribosomal protein L13</fullName>
    </alternativeName>
</protein>
<gene>
    <name evidence="1" type="primary">rplM</name>
    <name type="ordered locus">BCE33L0136</name>
</gene>
<evidence type="ECO:0000255" key="1">
    <source>
        <dbReference type="HAMAP-Rule" id="MF_01366"/>
    </source>
</evidence>
<evidence type="ECO:0000305" key="2"/>
<organism>
    <name type="scientific">Bacillus cereus (strain ZK / E33L)</name>
    <dbReference type="NCBI Taxonomy" id="288681"/>
    <lineage>
        <taxon>Bacteria</taxon>
        <taxon>Bacillati</taxon>
        <taxon>Bacillota</taxon>
        <taxon>Bacilli</taxon>
        <taxon>Bacillales</taxon>
        <taxon>Bacillaceae</taxon>
        <taxon>Bacillus</taxon>
        <taxon>Bacillus cereus group</taxon>
    </lineage>
</organism>
<feature type="chain" id="PRO_0000261684" description="Large ribosomal subunit protein uL13">
    <location>
        <begin position="1"/>
        <end position="145"/>
    </location>
</feature>
<keyword id="KW-0687">Ribonucleoprotein</keyword>
<keyword id="KW-0689">Ribosomal protein</keyword>
<reference key="1">
    <citation type="journal article" date="2006" name="J. Bacteriol.">
        <title>Pathogenomic sequence analysis of Bacillus cereus and Bacillus thuringiensis isolates closely related to Bacillus anthracis.</title>
        <authorList>
            <person name="Han C.S."/>
            <person name="Xie G."/>
            <person name="Challacombe J.F."/>
            <person name="Altherr M.R."/>
            <person name="Bhotika S.S."/>
            <person name="Bruce D."/>
            <person name="Campbell C.S."/>
            <person name="Campbell M.L."/>
            <person name="Chen J."/>
            <person name="Chertkov O."/>
            <person name="Cleland C."/>
            <person name="Dimitrijevic M."/>
            <person name="Doggett N.A."/>
            <person name="Fawcett J.J."/>
            <person name="Glavina T."/>
            <person name="Goodwin L.A."/>
            <person name="Hill K.K."/>
            <person name="Hitchcock P."/>
            <person name="Jackson P.J."/>
            <person name="Keim P."/>
            <person name="Kewalramani A.R."/>
            <person name="Longmire J."/>
            <person name="Lucas S."/>
            <person name="Malfatti S."/>
            <person name="McMurry K."/>
            <person name="Meincke L.J."/>
            <person name="Misra M."/>
            <person name="Moseman B.L."/>
            <person name="Mundt M."/>
            <person name="Munk A.C."/>
            <person name="Okinaka R.T."/>
            <person name="Parson-Quintana B."/>
            <person name="Reilly L.P."/>
            <person name="Richardson P."/>
            <person name="Robinson D.L."/>
            <person name="Rubin E."/>
            <person name="Saunders E."/>
            <person name="Tapia R."/>
            <person name="Tesmer J.G."/>
            <person name="Thayer N."/>
            <person name="Thompson L.S."/>
            <person name="Tice H."/>
            <person name="Ticknor L.O."/>
            <person name="Wills P.L."/>
            <person name="Brettin T.S."/>
            <person name="Gilna P."/>
        </authorList>
    </citation>
    <scope>NUCLEOTIDE SEQUENCE [LARGE SCALE GENOMIC DNA]</scope>
    <source>
        <strain>ZK / E33L</strain>
    </source>
</reference>
<comment type="function">
    <text evidence="1">This protein is one of the early assembly proteins of the 50S ribosomal subunit, although it is not seen to bind rRNA by itself. It is important during the early stages of 50S assembly.</text>
</comment>
<comment type="subunit">
    <text evidence="1">Part of the 50S ribosomal subunit.</text>
</comment>
<comment type="similarity">
    <text evidence="1">Belongs to the universal ribosomal protein uL13 family.</text>
</comment>
<name>RL13_BACCZ</name>
<proteinExistence type="inferred from homology"/>
<dbReference type="EMBL" id="CP000001">
    <property type="protein sequence ID" value="AAU20093.1"/>
    <property type="molecule type" value="Genomic_DNA"/>
</dbReference>
<dbReference type="RefSeq" id="WP_001260794.1">
    <property type="nucleotide sequence ID" value="NC_006274.1"/>
</dbReference>
<dbReference type="SMR" id="Q63H58"/>
<dbReference type="KEGG" id="bcz:BCE33L0136"/>
<dbReference type="Proteomes" id="UP000002612">
    <property type="component" value="Chromosome"/>
</dbReference>
<dbReference type="GO" id="GO:0022625">
    <property type="term" value="C:cytosolic large ribosomal subunit"/>
    <property type="evidence" value="ECO:0007669"/>
    <property type="project" value="TreeGrafter"/>
</dbReference>
<dbReference type="GO" id="GO:0003729">
    <property type="term" value="F:mRNA binding"/>
    <property type="evidence" value="ECO:0007669"/>
    <property type="project" value="TreeGrafter"/>
</dbReference>
<dbReference type="GO" id="GO:0003735">
    <property type="term" value="F:structural constituent of ribosome"/>
    <property type="evidence" value="ECO:0007669"/>
    <property type="project" value="InterPro"/>
</dbReference>
<dbReference type="GO" id="GO:0017148">
    <property type="term" value="P:negative regulation of translation"/>
    <property type="evidence" value="ECO:0007669"/>
    <property type="project" value="TreeGrafter"/>
</dbReference>
<dbReference type="GO" id="GO:0006412">
    <property type="term" value="P:translation"/>
    <property type="evidence" value="ECO:0007669"/>
    <property type="project" value="UniProtKB-UniRule"/>
</dbReference>
<dbReference type="CDD" id="cd00392">
    <property type="entry name" value="Ribosomal_L13"/>
    <property type="match status" value="1"/>
</dbReference>
<dbReference type="FunFam" id="3.90.1180.10:FF:000001">
    <property type="entry name" value="50S ribosomal protein L13"/>
    <property type="match status" value="1"/>
</dbReference>
<dbReference type="Gene3D" id="3.90.1180.10">
    <property type="entry name" value="Ribosomal protein L13"/>
    <property type="match status" value="1"/>
</dbReference>
<dbReference type="HAMAP" id="MF_01366">
    <property type="entry name" value="Ribosomal_uL13"/>
    <property type="match status" value="1"/>
</dbReference>
<dbReference type="InterPro" id="IPR005822">
    <property type="entry name" value="Ribosomal_uL13"/>
</dbReference>
<dbReference type="InterPro" id="IPR005823">
    <property type="entry name" value="Ribosomal_uL13_bac-type"/>
</dbReference>
<dbReference type="InterPro" id="IPR023563">
    <property type="entry name" value="Ribosomal_uL13_CS"/>
</dbReference>
<dbReference type="InterPro" id="IPR036899">
    <property type="entry name" value="Ribosomal_uL13_sf"/>
</dbReference>
<dbReference type="NCBIfam" id="TIGR01066">
    <property type="entry name" value="rplM_bact"/>
    <property type="match status" value="1"/>
</dbReference>
<dbReference type="PANTHER" id="PTHR11545:SF2">
    <property type="entry name" value="LARGE RIBOSOMAL SUBUNIT PROTEIN UL13M"/>
    <property type="match status" value="1"/>
</dbReference>
<dbReference type="PANTHER" id="PTHR11545">
    <property type="entry name" value="RIBOSOMAL PROTEIN L13"/>
    <property type="match status" value="1"/>
</dbReference>
<dbReference type="Pfam" id="PF00572">
    <property type="entry name" value="Ribosomal_L13"/>
    <property type="match status" value="1"/>
</dbReference>
<dbReference type="PIRSF" id="PIRSF002181">
    <property type="entry name" value="Ribosomal_L13"/>
    <property type="match status" value="1"/>
</dbReference>
<dbReference type="SUPFAM" id="SSF52161">
    <property type="entry name" value="Ribosomal protein L13"/>
    <property type="match status" value="1"/>
</dbReference>
<dbReference type="PROSITE" id="PS00783">
    <property type="entry name" value="RIBOSOMAL_L13"/>
    <property type="match status" value="1"/>
</dbReference>
<sequence>MRTTFMAKANEVERKWYVVDAEGQTLGRLASEVASILRGKNKPTFTPHVDTGDHVIIINAEKIHLTGNKLNDKMYYRHTNHPGGLKQRTALVLRTNYPVQMLELAIKGMLPKGRLGRQVSKKLNVYAGAEHPHQAQKPEVYELRG</sequence>